<gene>
    <name type="ordered locus">RSKD131_2455</name>
</gene>
<accession>B9KNZ3</accession>
<protein>
    <recommendedName>
        <fullName evidence="1">Putative membrane protein insertion efficiency factor</fullName>
    </recommendedName>
</protein>
<sequence length="84" mass="9202">MSPLAQVLALPVRAYRLLLSPWVGHGCRYQPTCSVYALDALERHGALKGGWLAARRILSCHPWGGSGYDPVPGADPEHDRRPRG</sequence>
<organism>
    <name type="scientific">Cereibacter sphaeroides (strain KD131 / KCTC 12085)</name>
    <name type="common">Rhodobacter sphaeroides</name>
    <dbReference type="NCBI Taxonomy" id="557760"/>
    <lineage>
        <taxon>Bacteria</taxon>
        <taxon>Pseudomonadati</taxon>
        <taxon>Pseudomonadota</taxon>
        <taxon>Alphaproteobacteria</taxon>
        <taxon>Rhodobacterales</taxon>
        <taxon>Paracoccaceae</taxon>
        <taxon>Cereibacter</taxon>
    </lineage>
</organism>
<dbReference type="EMBL" id="CP001150">
    <property type="protein sequence ID" value="ACM02315.1"/>
    <property type="molecule type" value="Genomic_DNA"/>
</dbReference>
<dbReference type="GeneID" id="67447835"/>
<dbReference type="KEGG" id="rsk:RSKD131_2455"/>
<dbReference type="HOGENOM" id="CLU_144811_5_3_5"/>
<dbReference type="GO" id="GO:0005886">
    <property type="term" value="C:plasma membrane"/>
    <property type="evidence" value="ECO:0007669"/>
    <property type="project" value="UniProtKB-SubCell"/>
</dbReference>
<dbReference type="HAMAP" id="MF_00386">
    <property type="entry name" value="UPF0161_YidD"/>
    <property type="match status" value="1"/>
</dbReference>
<dbReference type="InterPro" id="IPR002696">
    <property type="entry name" value="Membr_insert_effic_factor_YidD"/>
</dbReference>
<dbReference type="NCBIfam" id="TIGR00278">
    <property type="entry name" value="membrane protein insertion efficiency factor YidD"/>
    <property type="match status" value="1"/>
</dbReference>
<dbReference type="PANTHER" id="PTHR33383">
    <property type="entry name" value="MEMBRANE PROTEIN INSERTION EFFICIENCY FACTOR-RELATED"/>
    <property type="match status" value="1"/>
</dbReference>
<dbReference type="PANTHER" id="PTHR33383:SF1">
    <property type="entry name" value="MEMBRANE PROTEIN INSERTION EFFICIENCY FACTOR-RELATED"/>
    <property type="match status" value="1"/>
</dbReference>
<dbReference type="Pfam" id="PF01809">
    <property type="entry name" value="YidD"/>
    <property type="match status" value="1"/>
</dbReference>
<dbReference type="SMART" id="SM01234">
    <property type="entry name" value="Haemolytic"/>
    <property type="match status" value="1"/>
</dbReference>
<comment type="function">
    <text evidence="1">Could be involved in insertion of integral membrane proteins into the membrane.</text>
</comment>
<comment type="subcellular location">
    <subcellularLocation>
        <location evidence="1">Cell inner membrane</location>
        <topology evidence="1">Peripheral membrane protein</topology>
        <orientation evidence="1">Cytoplasmic side</orientation>
    </subcellularLocation>
</comment>
<comment type="similarity">
    <text evidence="1">Belongs to the UPF0161 family.</text>
</comment>
<feature type="chain" id="PRO_1000197773" description="Putative membrane protein insertion efficiency factor">
    <location>
        <begin position="1"/>
        <end position="84"/>
    </location>
</feature>
<feature type="region of interest" description="Disordered" evidence="2">
    <location>
        <begin position="63"/>
        <end position="84"/>
    </location>
</feature>
<feature type="compositionally biased region" description="Basic and acidic residues" evidence="2">
    <location>
        <begin position="75"/>
        <end position="84"/>
    </location>
</feature>
<reference key="1">
    <citation type="journal article" date="2009" name="J. Bacteriol.">
        <title>Complete genome sequence of Rhodobacter sphaeroides KD131.</title>
        <authorList>
            <person name="Lim S.-K."/>
            <person name="Kim S.J."/>
            <person name="Cha S.H."/>
            <person name="Oh Y.-K."/>
            <person name="Rhee H.-J."/>
            <person name="Kim M.-S."/>
            <person name="Lee J.K."/>
        </authorList>
    </citation>
    <scope>NUCLEOTIDE SEQUENCE [LARGE SCALE GENOMIC DNA]</scope>
    <source>
        <strain>KD131 / KCTC 12085</strain>
    </source>
</reference>
<name>YIDD_CERSK</name>
<proteinExistence type="inferred from homology"/>
<keyword id="KW-0997">Cell inner membrane</keyword>
<keyword id="KW-1003">Cell membrane</keyword>
<keyword id="KW-0472">Membrane</keyword>
<evidence type="ECO:0000255" key="1">
    <source>
        <dbReference type="HAMAP-Rule" id="MF_00386"/>
    </source>
</evidence>
<evidence type="ECO:0000256" key="2">
    <source>
        <dbReference type="SAM" id="MobiDB-lite"/>
    </source>
</evidence>